<evidence type="ECO:0000250" key="1"/>
<evidence type="ECO:0000255" key="2">
    <source>
        <dbReference type="HAMAP-Rule" id="MF_01320"/>
    </source>
</evidence>
<evidence type="ECO:0000256" key="3">
    <source>
        <dbReference type="SAM" id="MobiDB-lite"/>
    </source>
</evidence>
<evidence type="ECO:0000305" key="4"/>
<reference key="1">
    <citation type="submission" date="2005-03" db="EMBL/GenBank/DDBJ databases">
        <title>Complete structure of the chloroplast genome of Populus alba.</title>
        <authorList>
            <person name="Okumura S."/>
            <person name="Yamashita A."/>
            <person name="Kanamoto H."/>
            <person name="Hattori M."/>
            <person name="Takase H."/>
            <person name="Tomizawa K."/>
        </authorList>
    </citation>
    <scope>NUCLEOTIDE SEQUENCE [LARGE SCALE GENOMIC DNA]</scope>
</reference>
<organism>
    <name type="scientific">Populus alba</name>
    <name type="common">White poplar</name>
    <dbReference type="NCBI Taxonomy" id="43335"/>
    <lineage>
        <taxon>Eukaryota</taxon>
        <taxon>Viridiplantae</taxon>
        <taxon>Streptophyta</taxon>
        <taxon>Embryophyta</taxon>
        <taxon>Tracheophyta</taxon>
        <taxon>Spermatophyta</taxon>
        <taxon>Magnoliopsida</taxon>
        <taxon>eudicotyledons</taxon>
        <taxon>Gunneridae</taxon>
        <taxon>Pentapetalae</taxon>
        <taxon>rosids</taxon>
        <taxon>fabids</taxon>
        <taxon>Malpighiales</taxon>
        <taxon>Salicaceae</taxon>
        <taxon>Saliceae</taxon>
        <taxon>Populus</taxon>
    </lineage>
</organism>
<sequence length="275" mass="30100">MAIHLYKTSTPSTRNGAVDSQVKSNTRNNLIYGQHRCSKGRNARGIITARHRGGGHKRLYRKIDFRRNEKYIYGRIVTIEYDPNRNAYICLIHYGDGEKRYILHPRGAIIGDTIISGTEVPIKMGNALPLSTDMPLGTAIHNIEITLGRGGQLARAAGAVAKLIAKEGKSATLKLPSGEVRLISKNCSATVGQVGNAGVNQKSLGRAGSKCWLGKRPVVRGVVMNPVDHPHGGGEGRAPIGRKKPATPWGYPALGRRSRKRNKYSDNLILRRRSK</sequence>
<accession>Q14F95</accession>
<keyword id="KW-0150">Chloroplast</keyword>
<keyword id="KW-0934">Plastid</keyword>
<keyword id="KW-0687">Ribonucleoprotein</keyword>
<keyword id="KW-0689">Ribosomal protein</keyword>
<name>RK2A_POPAL</name>
<comment type="subunit">
    <text evidence="1">Part of the 50S ribosomal subunit.</text>
</comment>
<comment type="subcellular location">
    <subcellularLocation>
        <location>Plastid</location>
        <location>Chloroplast</location>
    </subcellularLocation>
</comment>
<comment type="similarity">
    <text evidence="4">Belongs to the universal ribosomal protein uL2 family.</text>
</comment>
<comment type="caution">
    <text evidence="4">There is 1 gene for this protein in each of the chloroplast inverted repeats; while they are usually identical, in this organism they are not. The other copy is AC Q14FB6.</text>
</comment>
<dbReference type="EMBL" id="AP008956">
    <property type="protein sequence ID" value="BAE97267.1"/>
    <property type="molecule type" value="Genomic_DNA"/>
</dbReference>
<dbReference type="SMR" id="Q14F95"/>
<dbReference type="KEGG" id="palz:4178245"/>
<dbReference type="OrthoDB" id="18550at3646"/>
<dbReference type="GO" id="GO:0009507">
    <property type="term" value="C:chloroplast"/>
    <property type="evidence" value="ECO:0007669"/>
    <property type="project" value="UniProtKB-SubCell"/>
</dbReference>
<dbReference type="GO" id="GO:0005762">
    <property type="term" value="C:mitochondrial large ribosomal subunit"/>
    <property type="evidence" value="ECO:0007669"/>
    <property type="project" value="TreeGrafter"/>
</dbReference>
<dbReference type="GO" id="GO:0019843">
    <property type="term" value="F:rRNA binding"/>
    <property type="evidence" value="ECO:0007669"/>
    <property type="project" value="UniProtKB-UniRule"/>
</dbReference>
<dbReference type="GO" id="GO:0003735">
    <property type="term" value="F:structural constituent of ribosome"/>
    <property type="evidence" value="ECO:0007669"/>
    <property type="project" value="InterPro"/>
</dbReference>
<dbReference type="GO" id="GO:0016740">
    <property type="term" value="F:transferase activity"/>
    <property type="evidence" value="ECO:0007669"/>
    <property type="project" value="InterPro"/>
</dbReference>
<dbReference type="GO" id="GO:0032543">
    <property type="term" value="P:mitochondrial translation"/>
    <property type="evidence" value="ECO:0007669"/>
    <property type="project" value="TreeGrafter"/>
</dbReference>
<dbReference type="FunFam" id="4.10.950.10:FF:000001">
    <property type="entry name" value="50S ribosomal protein L2"/>
    <property type="match status" value="1"/>
</dbReference>
<dbReference type="FunFam" id="2.30.30.30:FF:000008">
    <property type="entry name" value="50S ribosomal protein L2, chloroplastic"/>
    <property type="match status" value="1"/>
</dbReference>
<dbReference type="FunFam" id="2.40.50.140:FF:000029">
    <property type="entry name" value="50S ribosomal protein L2, chloroplastic"/>
    <property type="match status" value="1"/>
</dbReference>
<dbReference type="Gene3D" id="2.30.30.30">
    <property type="match status" value="1"/>
</dbReference>
<dbReference type="Gene3D" id="2.40.50.140">
    <property type="entry name" value="Nucleic acid-binding proteins"/>
    <property type="match status" value="1"/>
</dbReference>
<dbReference type="Gene3D" id="4.10.950.10">
    <property type="entry name" value="Ribosomal protein L2, domain 3"/>
    <property type="match status" value="1"/>
</dbReference>
<dbReference type="HAMAP" id="MF_01320_B">
    <property type="entry name" value="Ribosomal_uL2_B"/>
    <property type="match status" value="1"/>
</dbReference>
<dbReference type="InterPro" id="IPR012340">
    <property type="entry name" value="NA-bd_OB-fold"/>
</dbReference>
<dbReference type="InterPro" id="IPR014722">
    <property type="entry name" value="Rib_uL2_dom2"/>
</dbReference>
<dbReference type="InterPro" id="IPR002171">
    <property type="entry name" value="Ribosomal_uL2"/>
</dbReference>
<dbReference type="InterPro" id="IPR005880">
    <property type="entry name" value="Ribosomal_uL2_bac/org-type"/>
</dbReference>
<dbReference type="InterPro" id="IPR022669">
    <property type="entry name" value="Ribosomal_uL2_C"/>
</dbReference>
<dbReference type="InterPro" id="IPR022671">
    <property type="entry name" value="Ribosomal_uL2_CS"/>
</dbReference>
<dbReference type="InterPro" id="IPR014726">
    <property type="entry name" value="Ribosomal_uL2_dom3"/>
</dbReference>
<dbReference type="InterPro" id="IPR022666">
    <property type="entry name" value="Ribosomal_uL2_RNA-bd_dom"/>
</dbReference>
<dbReference type="InterPro" id="IPR008991">
    <property type="entry name" value="Translation_prot_SH3-like_sf"/>
</dbReference>
<dbReference type="NCBIfam" id="TIGR01171">
    <property type="entry name" value="rplB_bact"/>
    <property type="match status" value="1"/>
</dbReference>
<dbReference type="PANTHER" id="PTHR13691:SF5">
    <property type="entry name" value="LARGE RIBOSOMAL SUBUNIT PROTEIN UL2M"/>
    <property type="match status" value="1"/>
</dbReference>
<dbReference type="PANTHER" id="PTHR13691">
    <property type="entry name" value="RIBOSOMAL PROTEIN L2"/>
    <property type="match status" value="1"/>
</dbReference>
<dbReference type="Pfam" id="PF00181">
    <property type="entry name" value="Ribosomal_L2"/>
    <property type="match status" value="1"/>
</dbReference>
<dbReference type="Pfam" id="PF03947">
    <property type="entry name" value="Ribosomal_L2_C"/>
    <property type="match status" value="1"/>
</dbReference>
<dbReference type="PIRSF" id="PIRSF002158">
    <property type="entry name" value="Ribosomal_L2"/>
    <property type="match status" value="1"/>
</dbReference>
<dbReference type="SMART" id="SM01383">
    <property type="entry name" value="Ribosomal_L2"/>
    <property type="match status" value="1"/>
</dbReference>
<dbReference type="SMART" id="SM01382">
    <property type="entry name" value="Ribosomal_L2_C"/>
    <property type="match status" value="1"/>
</dbReference>
<dbReference type="SUPFAM" id="SSF50249">
    <property type="entry name" value="Nucleic acid-binding proteins"/>
    <property type="match status" value="1"/>
</dbReference>
<dbReference type="SUPFAM" id="SSF50104">
    <property type="entry name" value="Translation proteins SH3-like domain"/>
    <property type="match status" value="1"/>
</dbReference>
<dbReference type="PROSITE" id="PS00467">
    <property type="entry name" value="RIBOSOMAL_L2"/>
    <property type="match status" value="1"/>
</dbReference>
<feature type="chain" id="PRO_0000277098" description="Large ribosomal subunit protein uL2cz">
    <location>
        <begin position="1"/>
        <end position="275"/>
    </location>
</feature>
<feature type="region of interest" description="Disordered" evidence="3">
    <location>
        <begin position="1"/>
        <end position="20"/>
    </location>
</feature>
<feature type="region of interest" description="Disordered" evidence="3">
    <location>
        <begin position="225"/>
        <end position="275"/>
    </location>
</feature>
<proteinExistence type="inferred from homology"/>
<gene>
    <name type="primary">rpl2-A</name>
</gene>
<protein>
    <recommendedName>
        <fullName evidence="2">Large ribosomal subunit protein uL2cz</fullName>
    </recommendedName>
    <alternativeName>
        <fullName evidence="4">50S ribosomal protein L2-A, chloroplastic</fullName>
    </alternativeName>
</protein>
<geneLocation type="chloroplast"/>